<comment type="function">
    <text evidence="1">Catalyzes the reversible oxidation of malate to oxaloacetate.</text>
</comment>
<comment type="catalytic activity">
    <reaction evidence="1">
        <text>(S)-malate + NAD(+) = oxaloacetate + NADH + H(+)</text>
        <dbReference type="Rhea" id="RHEA:21432"/>
        <dbReference type="ChEBI" id="CHEBI:15378"/>
        <dbReference type="ChEBI" id="CHEBI:15589"/>
        <dbReference type="ChEBI" id="CHEBI:16452"/>
        <dbReference type="ChEBI" id="CHEBI:57540"/>
        <dbReference type="ChEBI" id="CHEBI:57945"/>
        <dbReference type="EC" id="1.1.1.37"/>
    </reaction>
</comment>
<comment type="similarity">
    <text evidence="1">Belongs to the LDH/MDH superfamily. MDH type 3 family.</text>
</comment>
<accession>Q8FYF4</accession>
<accession>G0K870</accession>
<feature type="chain" id="PRO_0000113444" description="Malate dehydrogenase">
    <location>
        <begin position="1"/>
        <end position="320"/>
    </location>
</feature>
<feature type="active site" description="Proton acceptor" evidence="1">
    <location>
        <position position="176"/>
    </location>
</feature>
<feature type="binding site" evidence="1">
    <location>
        <begin position="10"/>
        <end position="15"/>
    </location>
    <ligand>
        <name>NAD(+)</name>
        <dbReference type="ChEBI" id="CHEBI:57540"/>
    </ligand>
</feature>
<feature type="binding site" evidence="1">
    <location>
        <position position="34"/>
    </location>
    <ligand>
        <name>NAD(+)</name>
        <dbReference type="ChEBI" id="CHEBI:57540"/>
    </ligand>
</feature>
<feature type="binding site" evidence="1">
    <location>
        <position position="83"/>
    </location>
    <ligand>
        <name>substrate</name>
    </ligand>
</feature>
<feature type="binding site" evidence="1">
    <location>
        <position position="89"/>
    </location>
    <ligand>
        <name>substrate</name>
    </ligand>
</feature>
<feature type="binding site" evidence="1">
    <location>
        <position position="96"/>
    </location>
    <ligand>
        <name>NAD(+)</name>
        <dbReference type="ChEBI" id="CHEBI:57540"/>
    </ligand>
</feature>
<feature type="binding site" evidence="1">
    <location>
        <begin position="119"/>
        <end position="121"/>
    </location>
    <ligand>
        <name>NAD(+)</name>
        <dbReference type="ChEBI" id="CHEBI:57540"/>
    </ligand>
</feature>
<feature type="binding site" evidence="1">
    <location>
        <position position="121"/>
    </location>
    <ligand>
        <name>substrate</name>
    </ligand>
</feature>
<feature type="binding site" evidence="1">
    <location>
        <position position="152"/>
    </location>
    <ligand>
        <name>substrate</name>
    </ligand>
</feature>
<reference key="1">
    <citation type="journal article" date="2002" name="Proc. Natl. Acad. Sci. U.S.A.">
        <title>The Brucella suis genome reveals fundamental similarities between animal and plant pathogens and symbionts.</title>
        <authorList>
            <person name="Paulsen I.T."/>
            <person name="Seshadri R."/>
            <person name="Nelson K.E."/>
            <person name="Eisen J.A."/>
            <person name="Heidelberg J.F."/>
            <person name="Read T.D."/>
            <person name="Dodson R.J."/>
            <person name="Umayam L.A."/>
            <person name="Brinkac L.M."/>
            <person name="Beanan M.J."/>
            <person name="Daugherty S.C."/>
            <person name="DeBoy R.T."/>
            <person name="Durkin A.S."/>
            <person name="Kolonay J.F."/>
            <person name="Madupu R."/>
            <person name="Nelson W.C."/>
            <person name="Ayodeji B."/>
            <person name="Kraul M."/>
            <person name="Shetty J."/>
            <person name="Malek J.A."/>
            <person name="Van Aken S.E."/>
            <person name="Riedmuller S."/>
            <person name="Tettelin H."/>
            <person name="Gill S.R."/>
            <person name="White O."/>
            <person name="Salzberg S.L."/>
            <person name="Hoover D.L."/>
            <person name="Lindler L.E."/>
            <person name="Halling S.M."/>
            <person name="Boyle S.M."/>
            <person name="Fraser C.M."/>
        </authorList>
    </citation>
    <scope>NUCLEOTIDE SEQUENCE [LARGE SCALE GENOMIC DNA]</scope>
    <source>
        <strain>1330</strain>
    </source>
</reference>
<reference key="2">
    <citation type="journal article" date="2011" name="J. Bacteriol.">
        <title>Revised genome sequence of Brucella suis 1330.</title>
        <authorList>
            <person name="Tae H."/>
            <person name="Shallom S."/>
            <person name="Settlage R."/>
            <person name="Preston D."/>
            <person name="Adams L.G."/>
            <person name="Garner H.R."/>
        </authorList>
    </citation>
    <scope>NUCLEOTIDE SEQUENCE [LARGE SCALE GENOMIC DNA]</scope>
    <source>
        <strain>1330</strain>
    </source>
</reference>
<name>MDH_BRUSU</name>
<dbReference type="EC" id="1.1.1.37" evidence="1"/>
<dbReference type="EMBL" id="AE014291">
    <property type="protein sequence ID" value="AAN30819.1"/>
    <property type="molecule type" value="Genomic_DNA"/>
</dbReference>
<dbReference type="EMBL" id="CP002997">
    <property type="protein sequence ID" value="AEM19236.1"/>
    <property type="molecule type" value="Genomic_DNA"/>
</dbReference>
<dbReference type="RefSeq" id="WP_004691094.1">
    <property type="nucleotide sequence ID" value="NZ_KN046804.1"/>
</dbReference>
<dbReference type="SMR" id="Q8FYF4"/>
<dbReference type="GeneID" id="55591517"/>
<dbReference type="KEGG" id="bms:BR1927"/>
<dbReference type="KEGG" id="bsi:BS1330_I1921"/>
<dbReference type="PATRIC" id="fig|204722.21.peg.2978"/>
<dbReference type="HOGENOM" id="CLU_045401_2_1_5"/>
<dbReference type="PhylomeDB" id="Q8FYF4"/>
<dbReference type="Proteomes" id="UP000007104">
    <property type="component" value="Chromosome I"/>
</dbReference>
<dbReference type="GO" id="GO:0004459">
    <property type="term" value="F:L-lactate dehydrogenase activity"/>
    <property type="evidence" value="ECO:0007669"/>
    <property type="project" value="TreeGrafter"/>
</dbReference>
<dbReference type="GO" id="GO:0030060">
    <property type="term" value="F:L-malate dehydrogenase (NAD+) activity"/>
    <property type="evidence" value="ECO:0007669"/>
    <property type="project" value="UniProtKB-UniRule"/>
</dbReference>
<dbReference type="GO" id="GO:0006089">
    <property type="term" value="P:lactate metabolic process"/>
    <property type="evidence" value="ECO:0007669"/>
    <property type="project" value="TreeGrafter"/>
</dbReference>
<dbReference type="GO" id="GO:0006099">
    <property type="term" value="P:tricarboxylic acid cycle"/>
    <property type="evidence" value="ECO:0007669"/>
    <property type="project" value="UniProtKB-UniRule"/>
</dbReference>
<dbReference type="CDD" id="cd01339">
    <property type="entry name" value="LDH-like_MDH"/>
    <property type="match status" value="1"/>
</dbReference>
<dbReference type="FunFam" id="3.40.50.720:FF:000018">
    <property type="entry name" value="Malate dehydrogenase"/>
    <property type="match status" value="1"/>
</dbReference>
<dbReference type="FunFam" id="3.90.110.10:FF:000004">
    <property type="entry name" value="Malate dehydrogenase"/>
    <property type="match status" value="1"/>
</dbReference>
<dbReference type="Gene3D" id="3.90.110.10">
    <property type="entry name" value="Lactate dehydrogenase/glycoside hydrolase, family 4, C-terminal"/>
    <property type="match status" value="1"/>
</dbReference>
<dbReference type="Gene3D" id="3.40.50.720">
    <property type="entry name" value="NAD(P)-binding Rossmann-like Domain"/>
    <property type="match status" value="1"/>
</dbReference>
<dbReference type="HAMAP" id="MF_00487">
    <property type="entry name" value="Malate_dehydrog_3"/>
    <property type="match status" value="1"/>
</dbReference>
<dbReference type="InterPro" id="IPR001557">
    <property type="entry name" value="L-lactate/malate_DH"/>
</dbReference>
<dbReference type="InterPro" id="IPR022383">
    <property type="entry name" value="Lactate/malate_DH_C"/>
</dbReference>
<dbReference type="InterPro" id="IPR001236">
    <property type="entry name" value="Lactate/malate_DH_N"/>
</dbReference>
<dbReference type="InterPro" id="IPR015955">
    <property type="entry name" value="Lactate_DH/Glyco_Ohase_4_C"/>
</dbReference>
<dbReference type="InterPro" id="IPR011275">
    <property type="entry name" value="Malate_DH_type3"/>
</dbReference>
<dbReference type="InterPro" id="IPR036291">
    <property type="entry name" value="NAD(P)-bd_dom_sf"/>
</dbReference>
<dbReference type="NCBIfam" id="TIGR01763">
    <property type="entry name" value="MalateDH_bact"/>
    <property type="match status" value="1"/>
</dbReference>
<dbReference type="NCBIfam" id="NF004863">
    <property type="entry name" value="PRK06223.1"/>
    <property type="match status" value="1"/>
</dbReference>
<dbReference type="PANTHER" id="PTHR43128">
    <property type="entry name" value="L-2-HYDROXYCARBOXYLATE DEHYDROGENASE (NAD(P)(+))"/>
    <property type="match status" value="1"/>
</dbReference>
<dbReference type="PANTHER" id="PTHR43128:SF16">
    <property type="entry name" value="L-LACTATE DEHYDROGENASE"/>
    <property type="match status" value="1"/>
</dbReference>
<dbReference type="Pfam" id="PF02866">
    <property type="entry name" value="Ldh_1_C"/>
    <property type="match status" value="1"/>
</dbReference>
<dbReference type="Pfam" id="PF00056">
    <property type="entry name" value="Ldh_1_N"/>
    <property type="match status" value="1"/>
</dbReference>
<dbReference type="PIRSF" id="PIRSF000102">
    <property type="entry name" value="Lac_mal_DH"/>
    <property type="match status" value="1"/>
</dbReference>
<dbReference type="PRINTS" id="PR00086">
    <property type="entry name" value="LLDHDRGNASE"/>
</dbReference>
<dbReference type="SUPFAM" id="SSF56327">
    <property type="entry name" value="LDH C-terminal domain-like"/>
    <property type="match status" value="1"/>
</dbReference>
<dbReference type="SUPFAM" id="SSF51735">
    <property type="entry name" value="NAD(P)-binding Rossmann-fold domains"/>
    <property type="match status" value="1"/>
</dbReference>
<sequence length="320" mass="33672">MARNKIALIGSGMIGGTLAHLAGLKELGDVVLFDIAEGTPQGKGLDIAESSPVDGFDAKFTGANDYAAIEGADVVIVTAGVPRKPGMSRDDLLGINLKVMEQVGAGIKKYAPEAFVICITNPLDAMVWALQKFSGLPAHKVVGMAGVLDSARFRYFLSEEFNVSVEDVTAFVLGGHGDSMVPLARYSTVAGIPLPDLVKMGWTSRDKLDKIIQRTRDGGAEIVGLLKTGSAFYAPAASAIQVAESYLKDKKRVLPVAAQLSGQYGVKDMYVGVPTVIGANGVERIIEIDLDKDEKAQFDKSVASVAGLCEACIGIAPSLK</sequence>
<organism>
    <name type="scientific">Brucella suis biovar 1 (strain 1330)</name>
    <dbReference type="NCBI Taxonomy" id="204722"/>
    <lineage>
        <taxon>Bacteria</taxon>
        <taxon>Pseudomonadati</taxon>
        <taxon>Pseudomonadota</taxon>
        <taxon>Alphaproteobacteria</taxon>
        <taxon>Hyphomicrobiales</taxon>
        <taxon>Brucellaceae</taxon>
        <taxon>Brucella/Ochrobactrum group</taxon>
        <taxon>Brucella</taxon>
    </lineage>
</organism>
<gene>
    <name evidence="1" type="primary">mdh</name>
    <name type="ordered locus">BR1927</name>
    <name type="ordered locus">BS1330_I1921</name>
</gene>
<protein>
    <recommendedName>
        <fullName evidence="1">Malate dehydrogenase</fullName>
        <ecNumber evidence="1">1.1.1.37</ecNumber>
    </recommendedName>
</protein>
<keyword id="KW-0520">NAD</keyword>
<keyword id="KW-0560">Oxidoreductase</keyword>
<keyword id="KW-0816">Tricarboxylic acid cycle</keyword>
<evidence type="ECO:0000255" key="1">
    <source>
        <dbReference type="HAMAP-Rule" id="MF_00487"/>
    </source>
</evidence>
<proteinExistence type="inferred from homology"/>